<gene>
    <name evidence="1" type="primary">tmk</name>
    <name type="ordered locus">DNO_1213</name>
</gene>
<proteinExistence type="inferred from homology"/>
<sequence>MRGKFICLDGTEGSGKSSQIQAICSFLQQHGKTVITTREPGGTQIGEAIRELVLSPHYQPQALTELLLILAARHEHLQTVILPHLAAGTWVISDRFNDATYAYQGYGRGIDLKIIKTLEQIIQASFQPDLACILCLPEHIAAERVHNRAHDHDRIELENRAFFARVAQGYHARAQLPHARFIDASGDQNSVFQQIRHHLELLL</sequence>
<name>KTHY_DICNV</name>
<protein>
    <recommendedName>
        <fullName evidence="1">Thymidylate kinase</fullName>
        <ecNumber evidence="1">2.7.4.9</ecNumber>
    </recommendedName>
    <alternativeName>
        <fullName evidence="1">dTMP kinase</fullName>
    </alternativeName>
</protein>
<reference key="1">
    <citation type="journal article" date="2007" name="Nat. Biotechnol.">
        <title>Genome sequence and identification of candidate vaccine antigens from the animal pathogen Dichelobacter nodosus.</title>
        <authorList>
            <person name="Myers G.S.A."/>
            <person name="Parker D."/>
            <person name="Al-Hasani K."/>
            <person name="Kennan R.M."/>
            <person name="Seemann T."/>
            <person name="Ren Q."/>
            <person name="Badger J.H."/>
            <person name="Selengut J.D."/>
            <person name="Deboy R.T."/>
            <person name="Tettelin H."/>
            <person name="Boyce J.D."/>
            <person name="McCarl V.P."/>
            <person name="Han X."/>
            <person name="Nelson W.C."/>
            <person name="Madupu R."/>
            <person name="Mohamoud Y."/>
            <person name="Holley T."/>
            <person name="Fedorova N."/>
            <person name="Khouri H."/>
            <person name="Bottomley S.P."/>
            <person name="Whittington R.J."/>
            <person name="Adler B."/>
            <person name="Songer J.G."/>
            <person name="Rood J.I."/>
            <person name="Paulsen I.T."/>
        </authorList>
    </citation>
    <scope>NUCLEOTIDE SEQUENCE [LARGE SCALE GENOMIC DNA]</scope>
    <source>
        <strain>VCS1703A</strain>
    </source>
</reference>
<feature type="chain" id="PRO_1000071556" description="Thymidylate kinase">
    <location>
        <begin position="1"/>
        <end position="203"/>
    </location>
</feature>
<feature type="binding site" evidence="1">
    <location>
        <begin position="10"/>
        <end position="17"/>
    </location>
    <ligand>
        <name>ATP</name>
        <dbReference type="ChEBI" id="CHEBI:30616"/>
    </ligand>
</feature>
<accession>A5EXE3</accession>
<organism>
    <name type="scientific">Dichelobacter nodosus (strain VCS1703A)</name>
    <dbReference type="NCBI Taxonomy" id="246195"/>
    <lineage>
        <taxon>Bacteria</taxon>
        <taxon>Pseudomonadati</taxon>
        <taxon>Pseudomonadota</taxon>
        <taxon>Gammaproteobacteria</taxon>
        <taxon>Cardiobacteriales</taxon>
        <taxon>Cardiobacteriaceae</taxon>
        <taxon>Dichelobacter</taxon>
    </lineage>
</organism>
<keyword id="KW-0067">ATP-binding</keyword>
<keyword id="KW-0418">Kinase</keyword>
<keyword id="KW-0545">Nucleotide biosynthesis</keyword>
<keyword id="KW-0547">Nucleotide-binding</keyword>
<keyword id="KW-1185">Reference proteome</keyword>
<keyword id="KW-0808">Transferase</keyword>
<dbReference type="EC" id="2.7.4.9" evidence="1"/>
<dbReference type="EMBL" id="CP000513">
    <property type="protein sequence ID" value="ABQ14104.1"/>
    <property type="molecule type" value="Genomic_DNA"/>
</dbReference>
<dbReference type="RefSeq" id="WP_012031516.1">
    <property type="nucleotide sequence ID" value="NC_009446.1"/>
</dbReference>
<dbReference type="SMR" id="A5EXE3"/>
<dbReference type="STRING" id="246195.DNO_1213"/>
<dbReference type="KEGG" id="dno:DNO_1213"/>
<dbReference type="eggNOG" id="COG0125">
    <property type="taxonomic scope" value="Bacteria"/>
</dbReference>
<dbReference type="HOGENOM" id="CLU_049131_0_2_6"/>
<dbReference type="OrthoDB" id="9774907at2"/>
<dbReference type="Proteomes" id="UP000000248">
    <property type="component" value="Chromosome"/>
</dbReference>
<dbReference type="GO" id="GO:0005829">
    <property type="term" value="C:cytosol"/>
    <property type="evidence" value="ECO:0007669"/>
    <property type="project" value="TreeGrafter"/>
</dbReference>
<dbReference type="GO" id="GO:0005524">
    <property type="term" value="F:ATP binding"/>
    <property type="evidence" value="ECO:0007669"/>
    <property type="project" value="UniProtKB-UniRule"/>
</dbReference>
<dbReference type="GO" id="GO:0004798">
    <property type="term" value="F:dTMP kinase activity"/>
    <property type="evidence" value="ECO:0007669"/>
    <property type="project" value="UniProtKB-UniRule"/>
</dbReference>
<dbReference type="GO" id="GO:0006233">
    <property type="term" value="P:dTDP biosynthetic process"/>
    <property type="evidence" value="ECO:0007669"/>
    <property type="project" value="InterPro"/>
</dbReference>
<dbReference type="GO" id="GO:0006235">
    <property type="term" value="P:dTTP biosynthetic process"/>
    <property type="evidence" value="ECO:0007669"/>
    <property type="project" value="UniProtKB-UniRule"/>
</dbReference>
<dbReference type="GO" id="GO:0006227">
    <property type="term" value="P:dUDP biosynthetic process"/>
    <property type="evidence" value="ECO:0007669"/>
    <property type="project" value="TreeGrafter"/>
</dbReference>
<dbReference type="CDD" id="cd01672">
    <property type="entry name" value="TMPK"/>
    <property type="match status" value="1"/>
</dbReference>
<dbReference type="FunFam" id="3.40.50.300:FF:000225">
    <property type="entry name" value="Thymidylate kinase"/>
    <property type="match status" value="1"/>
</dbReference>
<dbReference type="Gene3D" id="3.40.50.300">
    <property type="entry name" value="P-loop containing nucleotide triphosphate hydrolases"/>
    <property type="match status" value="1"/>
</dbReference>
<dbReference type="HAMAP" id="MF_00165">
    <property type="entry name" value="Thymidylate_kinase"/>
    <property type="match status" value="1"/>
</dbReference>
<dbReference type="InterPro" id="IPR027417">
    <property type="entry name" value="P-loop_NTPase"/>
</dbReference>
<dbReference type="InterPro" id="IPR039430">
    <property type="entry name" value="Thymidylate_kin-like_dom"/>
</dbReference>
<dbReference type="InterPro" id="IPR018094">
    <property type="entry name" value="Thymidylate_kinase"/>
</dbReference>
<dbReference type="NCBIfam" id="TIGR00041">
    <property type="entry name" value="DTMP_kinase"/>
    <property type="match status" value="1"/>
</dbReference>
<dbReference type="PANTHER" id="PTHR10344">
    <property type="entry name" value="THYMIDYLATE KINASE"/>
    <property type="match status" value="1"/>
</dbReference>
<dbReference type="PANTHER" id="PTHR10344:SF4">
    <property type="entry name" value="UMP-CMP KINASE 2, MITOCHONDRIAL"/>
    <property type="match status" value="1"/>
</dbReference>
<dbReference type="Pfam" id="PF02223">
    <property type="entry name" value="Thymidylate_kin"/>
    <property type="match status" value="1"/>
</dbReference>
<dbReference type="SUPFAM" id="SSF52540">
    <property type="entry name" value="P-loop containing nucleoside triphosphate hydrolases"/>
    <property type="match status" value="1"/>
</dbReference>
<comment type="function">
    <text evidence="1">Phosphorylation of dTMP to form dTDP in both de novo and salvage pathways of dTTP synthesis.</text>
</comment>
<comment type="catalytic activity">
    <reaction evidence="1">
        <text>dTMP + ATP = dTDP + ADP</text>
        <dbReference type="Rhea" id="RHEA:13517"/>
        <dbReference type="ChEBI" id="CHEBI:30616"/>
        <dbReference type="ChEBI" id="CHEBI:58369"/>
        <dbReference type="ChEBI" id="CHEBI:63528"/>
        <dbReference type="ChEBI" id="CHEBI:456216"/>
        <dbReference type="EC" id="2.7.4.9"/>
    </reaction>
</comment>
<comment type="similarity">
    <text evidence="1">Belongs to the thymidylate kinase family.</text>
</comment>
<evidence type="ECO:0000255" key="1">
    <source>
        <dbReference type="HAMAP-Rule" id="MF_00165"/>
    </source>
</evidence>